<accession>A5VNS0</accession>
<proteinExistence type="inferred from homology"/>
<reference key="1">
    <citation type="journal article" date="2009" name="PLoS ONE">
        <title>Genome degradation in Brucella ovis corresponds with narrowing of its host range and tissue tropism.</title>
        <authorList>
            <person name="Tsolis R.M."/>
            <person name="Seshadri R."/>
            <person name="Santos R.L."/>
            <person name="Sangari F.J."/>
            <person name="Lobo J.M."/>
            <person name="de Jong M.F."/>
            <person name="Ren Q."/>
            <person name="Myers G."/>
            <person name="Brinkac L.M."/>
            <person name="Nelson W.C."/>
            <person name="Deboy R.T."/>
            <person name="Angiuoli S."/>
            <person name="Khouri H."/>
            <person name="Dimitrov G."/>
            <person name="Robinson J.R."/>
            <person name="Mulligan S."/>
            <person name="Walker R.L."/>
            <person name="Elzer P.E."/>
            <person name="Hassan K.A."/>
            <person name="Paulsen I.T."/>
        </authorList>
    </citation>
    <scope>NUCLEOTIDE SEQUENCE [LARGE SCALE GENOMIC DNA]</scope>
    <source>
        <strain>ATCC 25840 / 63/290 / NCTC 10512</strain>
    </source>
</reference>
<feature type="chain" id="PRO_1000076843" description="Pantothenate synthetase">
    <location>
        <begin position="1"/>
        <end position="293"/>
    </location>
</feature>
<feature type="active site" description="Proton donor" evidence="1">
    <location>
        <position position="37"/>
    </location>
</feature>
<feature type="binding site" evidence="1">
    <location>
        <begin position="30"/>
        <end position="37"/>
    </location>
    <ligand>
        <name>ATP</name>
        <dbReference type="ChEBI" id="CHEBI:30616"/>
    </ligand>
</feature>
<feature type="binding site" evidence="1">
    <location>
        <position position="61"/>
    </location>
    <ligand>
        <name>(R)-pantoate</name>
        <dbReference type="ChEBI" id="CHEBI:15980"/>
    </ligand>
</feature>
<feature type="binding site" evidence="1">
    <location>
        <position position="61"/>
    </location>
    <ligand>
        <name>beta-alanine</name>
        <dbReference type="ChEBI" id="CHEBI:57966"/>
    </ligand>
</feature>
<feature type="binding site" evidence="1">
    <location>
        <begin position="147"/>
        <end position="150"/>
    </location>
    <ligand>
        <name>ATP</name>
        <dbReference type="ChEBI" id="CHEBI:30616"/>
    </ligand>
</feature>
<feature type="binding site" evidence="1">
    <location>
        <position position="153"/>
    </location>
    <ligand>
        <name>(R)-pantoate</name>
        <dbReference type="ChEBI" id="CHEBI:15980"/>
    </ligand>
</feature>
<feature type="binding site" evidence="1">
    <location>
        <position position="176"/>
    </location>
    <ligand>
        <name>ATP</name>
        <dbReference type="ChEBI" id="CHEBI:30616"/>
    </ligand>
</feature>
<feature type="binding site" evidence="1">
    <location>
        <begin position="184"/>
        <end position="187"/>
    </location>
    <ligand>
        <name>ATP</name>
        <dbReference type="ChEBI" id="CHEBI:30616"/>
    </ligand>
</feature>
<dbReference type="EC" id="6.3.2.1" evidence="1"/>
<dbReference type="EMBL" id="CP000708">
    <property type="protein sequence ID" value="ABQ61123.1"/>
    <property type="molecule type" value="Genomic_DNA"/>
</dbReference>
<dbReference type="RefSeq" id="WP_004682909.1">
    <property type="nucleotide sequence ID" value="NC_009505.1"/>
</dbReference>
<dbReference type="SMR" id="A5VNS0"/>
<dbReference type="GeneID" id="97534282"/>
<dbReference type="KEGG" id="bov:BOV_0346"/>
<dbReference type="HOGENOM" id="CLU_047148_0_0_5"/>
<dbReference type="PhylomeDB" id="A5VNS0"/>
<dbReference type="UniPathway" id="UPA00028">
    <property type="reaction ID" value="UER00005"/>
</dbReference>
<dbReference type="Proteomes" id="UP000006383">
    <property type="component" value="Chromosome I"/>
</dbReference>
<dbReference type="GO" id="GO:0005829">
    <property type="term" value="C:cytosol"/>
    <property type="evidence" value="ECO:0007669"/>
    <property type="project" value="TreeGrafter"/>
</dbReference>
<dbReference type="GO" id="GO:0005524">
    <property type="term" value="F:ATP binding"/>
    <property type="evidence" value="ECO:0007669"/>
    <property type="project" value="UniProtKB-KW"/>
</dbReference>
<dbReference type="GO" id="GO:0004592">
    <property type="term" value="F:pantoate-beta-alanine ligase activity"/>
    <property type="evidence" value="ECO:0007669"/>
    <property type="project" value="UniProtKB-UniRule"/>
</dbReference>
<dbReference type="GO" id="GO:0015940">
    <property type="term" value="P:pantothenate biosynthetic process"/>
    <property type="evidence" value="ECO:0007669"/>
    <property type="project" value="UniProtKB-UniRule"/>
</dbReference>
<dbReference type="CDD" id="cd00560">
    <property type="entry name" value="PanC"/>
    <property type="match status" value="1"/>
</dbReference>
<dbReference type="FunFam" id="3.40.50.620:FF:000013">
    <property type="entry name" value="Pantothenate synthetase"/>
    <property type="match status" value="1"/>
</dbReference>
<dbReference type="Gene3D" id="3.40.50.620">
    <property type="entry name" value="HUPs"/>
    <property type="match status" value="1"/>
</dbReference>
<dbReference type="Gene3D" id="3.30.1300.10">
    <property type="entry name" value="Pantoate-beta-alanine ligase, C-terminal domain"/>
    <property type="match status" value="1"/>
</dbReference>
<dbReference type="HAMAP" id="MF_00158">
    <property type="entry name" value="PanC"/>
    <property type="match status" value="1"/>
</dbReference>
<dbReference type="InterPro" id="IPR004821">
    <property type="entry name" value="Cyt_trans-like"/>
</dbReference>
<dbReference type="InterPro" id="IPR003721">
    <property type="entry name" value="Pantoate_ligase"/>
</dbReference>
<dbReference type="InterPro" id="IPR042176">
    <property type="entry name" value="Pantoate_ligase_C"/>
</dbReference>
<dbReference type="InterPro" id="IPR014729">
    <property type="entry name" value="Rossmann-like_a/b/a_fold"/>
</dbReference>
<dbReference type="NCBIfam" id="TIGR00125">
    <property type="entry name" value="cyt_tran_rel"/>
    <property type="match status" value="1"/>
</dbReference>
<dbReference type="NCBIfam" id="TIGR00018">
    <property type="entry name" value="panC"/>
    <property type="match status" value="1"/>
</dbReference>
<dbReference type="PANTHER" id="PTHR21299">
    <property type="entry name" value="CYTIDYLATE KINASE/PANTOATE-BETA-ALANINE LIGASE"/>
    <property type="match status" value="1"/>
</dbReference>
<dbReference type="PANTHER" id="PTHR21299:SF1">
    <property type="entry name" value="PANTOATE--BETA-ALANINE LIGASE"/>
    <property type="match status" value="1"/>
</dbReference>
<dbReference type="Pfam" id="PF02569">
    <property type="entry name" value="Pantoate_ligase"/>
    <property type="match status" value="1"/>
</dbReference>
<dbReference type="SUPFAM" id="SSF52374">
    <property type="entry name" value="Nucleotidylyl transferase"/>
    <property type="match status" value="1"/>
</dbReference>
<name>PANC_BRUO2</name>
<protein>
    <recommendedName>
        <fullName evidence="1">Pantothenate synthetase</fullName>
        <shortName evidence="1">PS</shortName>
        <ecNumber evidence="1">6.3.2.1</ecNumber>
    </recommendedName>
    <alternativeName>
        <fullName evidence="1">Pantoate--beta-alanine ligase</fullName>
    </alternativeName>
    <alternativeName>
        <fullName evidence="1">Pantoate-activating enzyme</fullName>
    </alternativeName>
</protein>
<keyword id="KW-0067">ATP-binding</keyword>
<keyword id="KW-0963">Cytoplasm</keyword>
<keyword id="KW-0436">Ligase</keyword>
<keyword id="KW-0547">Nucleotide-binding</keyword>
<keyword id="KW-0566">Pantothenate biosynthesis</keyword>
<evidence type="ECO:0000255" key="1">
    <source>
        <dbReference type="HAMAP-Rule" id="MF_00158"/>
    </source>
</evidence>
<comment type="function">
    <text evidence="1">Catalyzes the condensation of pantoate with beta-alanine in an ATP-dependent reaction via a pantoyl-adenylate intermediate.</text>
</comment>
<comment type="catalytic activity">
    <reaction evidence="1">
        <text>(R)-pantoate + beta-alanine + ATP = (R)-pantothenate + AMP + diphosphate + H(+)</text>
        <dbReference type="Rhea" id="RHEA:10912"/>
        <dbReference type="ChEBI" id="CHEBI:15378"/>
        <dbReference type="ChEBI" id="CHEBI:15980"/>
        <dbReference type="ChEBI" id="CHEBI:29032"/>
        <dbReference type="ChEBI" id="CHEBI:30616"/>
        <dbReference type="ChEBI" id="CHEBI:33019"/>
        <dbReference type="ChEBI" id="CHEBI:57966"/>
        <dbReference type="ChEBI" id="CHEBI:456215"/>
        <dbReference type="EC" id="6.3.2.1"/>
    </reaction>
</comment>
<comment type="pathway">
    <text evidence="1">Cofactor biosynthesis; (R)-pantothenate biosynthesis; (R)-pantothenate from (R)-pantoate and beta-alanine: step 1/1.</text>
</comment>
<comment type="subunit">
    <text evidence="1">Homodimer.</text>
</comment>
<comment type="subcellular location">
    <subcellularLocation>
        <location evidence="1">Cytoplasm</location>
    </subcellularLocation>
</comment>
<comment type="miscellaneous">
    <text evidence="1">The reaction proceeds by a bi uni uni bi ping pong mechanism.</text>
</comment>
<comment type="similarity">
    <text evidence="1">Belongs to the pantothenate synthetase family.</text>
</comment>
<sequence>MQIIHTIEELRQALAPARQQGKKIGFVPTMGYLHKGHLELVRRARVENDVTLVSIFVNPLQFGANEDLGRYPRDLERDAGLLHDAQVDYLFAPTVSDMYPRPMQTVVDVPPLGNQMEGEARPGHFAGVATVVSKLFNIVGPDAAYFGEKDFQQLVIIRRMVDDMAIPVRIVGVETVREDDGLACSSRNVYLTPEQRRAAIIVPQALDEADRLYRSGMDDPDALEAAIRTFIGRQPLAVPEVIAIRDPETLERLPALQGRPILVALFVRVGATRLLDNRVIGHAAPQITQERAA</sequence>
<organism>
    <name type="scientific">Brucella ovis (strain ATCC 25840 / 63/290 / NCTC 10512)</name>
    <dbReference type="NCBI Taxonomy" id="444178"/>
    <lineage>
        <taxon>Bacteria</taxon>
        <taxon>Pseudomonadati</taxon>
        <taxon>Pseudomonadota</taxon>
        <taxon>Alphaproteobacteria</taxon>
        <taxon>Hyphomicrobiales</taxon>
        <taxon>Brucellaceae</taxon>
        <taxon>Brucella/Ochrobactrum group</taxon>
        <taxon>Brucella</taxon>
    </lineage>
</organism>
<gene>
    <name evidence="1" type="primary">panC</name>
    <name type="ordered locus">BOV_0346</name>
</gene>